<protein>
    <recommendedName>
        <fullName evidence="1">Ribonuclease VapC10</fullName>
        <shortName evidence="1">RNase VapC10</shortName>
        <ecNumber evidence="1">3.1.-.-</ecNumber>
    </recommendedName>
    <alternativeName>
        <fullName evidence="1">Toxin VapC10</fullName>
    </alternativeName>
</protein>
<feature type="chain" id="PRO_0000428572" description="Ribonuclease VapC10">
    <location>
        <begin position="1"/>
        <end position="133"/>
    </location>
</feature>
<feature type="domain" description="PINc" evidence="1">
    <location>
        <begin position="2"/>
        <end position="119"/>
    </location>
</feature>
<feature type="binding site" evidence="1">
    <location>
        <position position="5"/>
    </location>
    <ligand>
        <name>Mg(2+)</name>
        <dbReference type="ChEBI" id="CHEBI:18420"/>
    </ligand>
</feature>
<feature type="binding site" evidence="1">
    <location>
        <position position="92"/>
    </location>
    <ligand>
        <name>Mg(2+)</name>
        <dbReference type="ChEBI" id="CHEBI:18420"/>
    </ligand>
</feature>
<gene>
    <name evidence="1" type="primary">vapC10</name>
    <name type="ordered locus">MT1441</name>
</gene>
<dbReference type="EC" id="3.1.-.-" evidence="1"/>
<dbReference type="EMBL" id="AE000516">
    <property type="protein sequence ID" value="AAK45706.1"/>
    <property type="molecule type" value="Genomic_DNA"/>
</dbReference>
<dbReference type="PIR" id="B70900">
    <property type="entry name" value="B70900"/>
</dbReference>
<dbReference type="RefSeq" id="WP_003898861.1">
    <property type="nucleotide sequence ID" value="NZ_KK341227.1"/>
</dbReference>
<dbReference type="SMR" id="P9WFA6"/>
<dbReference type="KEGG" id="mtc:MT1441"/>
<dbReference type="PATRIC" id="fig|83331.31.peg.1549"/>
<dbReference type="HOGENOM" id="CLU_118482_0_1_11"/>
<dbReference type="Proteomes" id="UP000001020">
    <property type="component" value="Chromosome"/>
</dbReference>
<dbReference type="GO" id="GO:0000287">
    <property type="term" value="F:magnesium ion binding"/>
    <property type="evidence" value="ECO:0007669"/>
    <property type="project" value="UniProtKB-UniRule"/>
</dbReference>
<dbReference type="GO" id="GO:0004540">
    <property type="term" value="F:RNA nuclease activity"/>
    <property type="evidence" value="ECO:0007669"/>
    <property type="project" value="InterPro"/>
</dbReference>
<dbReference type="CDD" id="cd18741">
    <property type="entry name" value="PIN_VapC4-5_FitB-like"/>
    <property type="match status" value="1"/>
</dbReference>
<dbReference type="FunFam" id="3.40.50.1010:FF:000070">
    <property type="entry name" value="Ribonuclease VapC"/>
    <property type="match status" value="1"/>
</dbReference>
<dbReference type="Gene3D" id="3.40.50.1010">
    <property type="entry name" value="5'-nuclease"/>
    <property type="match status" value="1"/>
</dbReference>
<dbReference type="HAMAP" id="MF_00265">
    <property type="entry name" value="VapC_Nob1"/>
    <property type="match status" value="1"/>
</dbReference>
<dbReference type="InterPro" id="IPR029060">
    <property type="entry name" value="PIN-like_dom_sf"/>
</dbReference>
<dbReference type="InterPro" id="IPR002716">
    <property type="entry name" value="PIN_dom"/>
</dbReference>
<dbReference type="InterPro" id="IPR050556">
    <property type="entry name" value="Type_II_TA_system_RNase"/>
</dbReference>
<dbReference type="InterPro" id="IPR022907">
    <property type="entry name" value="VapC_family"/>
</dbReference>
<dbReference type="PANTHER" id="PTHR33653">
    <property type="entry name" value="RIBONUCLEASE VAPC2"/>
    <property type="match status" value="1"/>
</dbReference>
<dbReference type="PANTHER" id="PTHR33653:SF1">
    <property type="entry name" value="RIBONUCLEASE VAPC2"/>
    <property type="match status" value="1"/>
</dbReference>
<dbReference type="Pfam" id="PF01850">
    <property type="entry name" value="PIN"/>
    <property type="match status" value="1"/>
</dbReference>
<dbReference type="SUPFAM" id="SSF88723">
    <property type="entry name" value="PIN domain-like"/>
    <property type="match status" value="1"/>
</dbReference>
<organism>
    <name type="scientific">Mycobacterium tuberculosis (strain CDC 1551 / Oshkosh)</name>
    <dbReference type="NCBI Taxonomy" id="83331"/>
    <lineage>
        <taxon>Bacteria</taxon>
        <taxon>Bacillati</taxon>
        <taxon>Actinomycetota</taxon>
        <taxon>Actinomycetes</taxon>
        <taxon>Mycobacteriales</taxon>
        <taxon>Mycobacteriaceae</taxon>
        <taxon>Mycobacterium</taxon>
        <taxon>Mycobacterium tuberculosis complex</taxon>
    </lineage>
</organism>
<keyword id="KW-0378">Hydrolase</keyword>
<keyword id="KW-0460">Magnesium</keyword>
<keyword id="KW-0479">Metal-binding</keyword>
<keyword id="KW-0540">Nuclease</keyword>
<keyword id="KW-1185">Reference proteome</keyword>
<keyword id="KW-1277">Toxin-antitoxin system</keyword>
<evidence type="ECO:0000255" key="1">
    <source>
        <dbReference type="HAMAP-Rule" id="MF_00265"/>
    </source>
</evidence>
<proteinExistence type="inferred from homology"/>
<sequence length="133" mass="14952">MILVDSDVLIAHLRGVVAARDWLVSARKDGPLAISVVSTAELIGGMRTAERREVWRLLASFRVQPATEVIARRAGDMMRRYRRSHNRIGLGDYLIAATADVQDLQLATLNVWHFPMFEQLKPPFAVPGHRPRA</sequence>
<reference key="1">
    <citation type="journal article" date="2002" name="J. Bacteriol.">
        <title>Whole-genome comparison of Mycobacterium tuberculosis clinical and laboratory strains.</title>
        <authorList>
            <person name="Fleischmann R.D."/>
            <person name="Alland D."/>
            <person name="Eisen J.A."/>
            <person name="Carpenter L."/>
            <person name="White O."/>
            <person name="Peterson J.D."/>
            <person name="DeBoy R.T."/>
            <person name="Dodson R.J."/>
            <person name="Gwinn M.L."/>
            <person name="Haft D.H."/>
            <person name="Hickey E.K."/>
            <person name="Kolonay J.F."/>
            <person name="Nelson W.C."/>
            <person name="Umayam L.A."/>
            <person name="Ermolaeva M.D."/>
            <person name="Salzberg S.L."/>
            <person name="Delcher A."/>
            <person name="Utterback T.R."/>
            <person name="Weidman J.F."/>
            <person name="Khouri H.M."/>
            <person name="Gill J."/>
            <person name="Mikula A."/>
            <person name="Bishai W."/>
            <person name="Jacobs W.R. Jr."/>
            <person name="Venter J.C."/>
            <person name="Fraser C.M."/>
        </authorList>
    </citation>
    <scope>NUCLEOTIDE SEQUENCE [LARGE SCALE GENOMIC DNA]</scope>
    <source>
        <strain>CDC 1551 / Oshkosh</strain>
    </source>
</reference>
<accession>P9WFA6</accession>
<accession>L0T6J0</accession>
<accession>P71665</accession>
<accession>Q7D8H3</accession>
<name>VPC10_MYCTO</name>
<comment type="function">
    <text evidence="1">Toxic component of a type II toxin-antitoxin (TA) system. An RNase. The cognate antitoxin is VapB10 (By similarity).</text>
</comment>
<comment type="cofactor">
    <cofactor evidence="1">
        <name>Mg(2+)</name>
        <dbReference type="ChEBI" id="CHEBI:18420"/>
    </cofactor>
</comment>
<comment type="similarity">
    <text evidence="1">Belongs to the PINc/VapC protein family.</text>
</comment>